<evidence type="ECO:0000255" key="1">
    <source>
        <dbReference type="HAMAP-Rule" id="MF_03105"/>
    </source>
</evidence>
<evidence type="ECO:0000256" key="2">
    <source>
        <dbReference type="SAM" id="MobiDB-lite"/>
    </source>
</evidence>
<reference key="1">
    <citation type="journal article" date="2004" name="Nature">
        <title>Genome evolution in yeasts.</title>
        <authorList>
            <person name="Dujon B."/>
            <person name="Sherman D."/>
            <person name="Fischer G."/>
            <person name="Durrens P."/>
            <person name="Casaregola S."/>
            <person name="Lafontaine I."/>
            <person name="de Montigny J."/>
            <person name="Marck C."/>
            <person name="Neuveglise C."/>
            <person name="Talla E."/>
            <person name="Goffard N."/>
            <person name="Frangeul L."/>
            <person name="Aigle M."/>
            <person name="Anthouard V."/>
            <person name="Babour A."/>
            <person name="Barbe V."/>
            <person name="Barnay S."/>
            <person name="Blanchin S."/>
            <person name="Beckerich J.-M."/>
            <person name="Beyne E."/>
            <person name="Bleykasten C."/>
            <person name="Boisrame A."/>
            <person name="Boyer J."/>
            <person name="Cattolico L."/>
            <person name="Confanioleri F."/>
            <person name="de Daruvar A."/>
            <person name="Despons L."/>
            <person name="Fabre E."/>
            <person name="Fairhead C."/>
            <person name="Ferry-Dumazet H."/>
            <person name="Groppi A."/>
            <person name="Hantraye F."/>
            <person name="Hennequin C."/>
            <person name="Jauniaux N."/>
            <person name="Joyet P."/>
            <person name="Kachouri R."/>
            <person name="Kerrest A."/>
            <person name="Koszul R."/>
            <person name="Lemaire M."/>
            <person name="Lesur I."/>
            <person name="Ma L."/>
            <person name="Muller H."/>
            <person name="Nicaud J.-M."/>
            <person name="Nikolski M."/>
            <person name="Oztas S."/>
            <person name="Ozier-Kalogeropoulos O."/>
            <person name="Pellenz S."/>
            <person name="Potier S."/>
            <person name="Richard G.-F."/>
            <person name="Straub M.-L."/>
            <person name="Suleau A."/>
            <person name="Swennen D."/>
            <person name="Tekaia F."/>
            <person name="Wesolowski-Louvel M."/>
            <person name="Westhof E."/>
            <person name="Wirth B."/>
            <person name="Zeniou-Meyer M."/>
            <person name="Zivanovic Y."/>
            <person name="Bolotin-Fukuhara M."/>
            <person name="Thierry A."/>
            <person name="Bouchier C."/>
            <person name="Caudron B."/>
            <person name="Scarpelli C."/>
            <person name="Gaillardin C."/>
            <person name="Weissenbach J."/>
            <person name="Wincker P."/>
            <person name="Souciet J.-L."/>
        </authorList>
    </citation>
    <scope>NUCLEOTIDE SEQUENCE [LARGE SCALE GENOMIC DNA]</scope>
    <source>
        <strain>ATCC 2001 / BCRC 20586 / JCM 3761 / NBRC 0622 / NRRL Y-65 / CBS 138</strain>
    </source>
</reference>
<name>MDM34_CANGA</name>
<comment type="function">
    <text evidence="1">Component of the ERMES/MDM complex, which serves as a molecular tether to connect the endoplasmic reticulum (ER) and mitochondria. Components of this complex are involved in the control of mitochondrial shape and protein biogenesis, and function in nonvesicular lipid trafficking between the ER and mitochondria. MDM34 is required for the interaction of the ER-resident membrane protein MMM1 and the outer mitochondrial membrane-resident beta-barrel protein MDM10.</text>
</comment>
<comment type="subunit">
    <text evidence="1">Component of the ER-mitochondria encounter structure (ERMES) or MDM complex, composed of MMM1, MDM10, MDM12 and MDM34.</text>
</comment>
<comment type="subcellular location">
    <subcellularLocation>
        <location evidence="1">Mitochondrion outer membrane</location>
        <topology evidence="1">Multi-pass membrane protein</topology>
    </subcellularLocation>
    <text evidence="1">The ERMES/MDM complex localizes to a few discrete foci (around 10 per single cell), that represent mitochondria-endoplasmic reticulum junctions. These foci are often found next to mtDNA nucleoids.</text>
</comment>
<comment type="domain">
    <text evidence="1">Lacks alpha-helical transmembrane segments, suggesting that it resides in the membrane via beta-sheet conformations similar to those predicted for other outer membrane proteins and porin.</text>
</comment>
<comment type="domain">
    <text evidence="1">The SMP-LTD domain is a barrel-like domain that can bind various types of glycerophospholipids in its interior and mediate their transfer between two adjacent bilayers.</text>
</comment>
<comment type="similarity">
    <text evidence="1">Belongs to the MDM34 family.</text>
</comment>
<gene>
    <name evidence="1" type="primary">MDM34</name>
    <name type="ordered locus">CAGL0I07007g</name>
</gene>
<accession>Q6FQE0</accession>
<organism>
    <name type="scientific">Candida glabrata (strain ATCC 2001 / BCRC 20586 / JCM 3761 / NBRC 0622 / NRRL Y-65 / CBS 138)</name>
    <name type="common">Yeast</name>
    <name type="synonym">Nakaseomyces glabratus</name>
    <dbReference type="NCBI Taxonomy" id="284593"/>
    <lineage>
        <taxon>Eukaryota</taxon>
        <taxon>Fungi</taxon>
        <taxon>Dikarya</taxon>
        <taxon>Ascomycota</taxon>
        <taxon>Saccharomycotina</taxon>
        <taxon>Saccharomycetes</taxon>
        <taxon>Saccharomycetales</taxon>
        <taxon>Saccharomycetaceae</taxon>
        <taxon>Nakaseomyces</taxon>
    </lineage>
</organism>
<proteinExistence type="inferred from homology"/>
<keyword id="KW-0445">Lipid transport</keyword>
<keyword id="KW-0446">Lipid-binding</keyword>
<keyword id="KW-0472">Membrane</keyword>
<keyword id="KW-0496">Mitochondrion</keyword>
<keyword id="KW-1000">Mitochondrion outer membrane</keyword>
<keyword id="KW-1185">Reference proteome</keyword>
<keyword id="KW-0812">Transmembrane</keyword>
<keyword id="KW-1134">Transmembrane beta strand</keyword>
<keyword id="KW-0813">Transport</keyword>
<protein>
    <recommendedName>
        <fullName evidence="1">Mitochondrial distribution and morphology protein 34</fullName>
    </recommendedName>
</protein>
<feature type="chain" id="PRO_0000384335" description="Mitochondrial distribution and morphology protein 34">
    <location>
        <begin position="1"/>
        <end position="538"/>
    </location>
</feature>
<feature type="domain" description="SMP-LTD" evidence="1">
    <location>
        <begin position="1"/>
        <end position="224"/>
    </location>
</feature>
<feature type="region of interest" description="Disordered" evidence="2">
    <location>
        <begin position="26"/>
        <end position="55"/>
    </location>
</feature>
<feature type="region of interest" description="Disordered" evidence="2">
    <location>
        <begin position="231"/>
        <end position="251"/>
    </location>
</feature>
<dbReference type="EMBL" id="CR380955">
    <property type="protein sequence ID" value="CAG60491.1"/>
    <property type="molecule type" value="Genomic_DNA"/>
</dbReference>
<dbReference type="RefSeq" id="XP_447554.1">
    <property type="nucleotide sequence ID" value="XM_447554.1"/>
</dbReference>
<dbReference type="FunCoup" id="Q6FQE0">
    <property type="interactions" value="77"/>
</dbReference>
<dbReference type="STRING" id="284593.Q6FQE0"/>
<dbReference type="EnsemblFungi" id="CAGL0I07007g-T">
    <property type="protein sequence ID" value="CAGL0I07007g-T-p1"/>
    <property type="gene ID" value="CAGL0I07007g"/>
</dbReference>
<dbReference type="KEGG" id="cgr:2889064"/>
<dbReference type="CGD" id="CAL0132378">
    <property type="gene designation" value="MDM34"/>
</dbReference>
<dbReference type="VEuPathDB" id="FungiDB:CAGL0I07007g"/>
<dbReference type="eggNOG" id="ENOG502QT3W">
    <property type="taxonomic scope" value="Eukaryota"/>
</dbReference>
<dbReference type="HOGENOM" id="CLU_036329_0_0_1"/>
<dbReference type="InParanoid" id="Q6FQE0"/>
<dbReference type="OMA" id="PGCLERQ"/>
<dbReference type="Proteomes" id="UP000002428">
    <property type="component" value="Chromosome I"/>
</dbReference>
<dbReference type="GO" id="GO:0032865">
    <property type="term" value="C:ERMES complex"/>
    <property type="evidence" value="ECO:0000314"/>
    <property type="project" value="CGD"/>
</dbReference>
<dbReference type="GO" id="GO:0005741">
    <property type="term" value="C:mitochondrial outer membrane"/>
    <property type="evidence" value="ECO:0000314"/>
    <property type="project" value="CGD"/>
</dbReference>
<dbReference type="GO" id="GO:0008289">
    <property type="term" value="F:lipid binding"/>
    <property type="evidence" value="ECO:0007669"/>
    <property type="project" value="UniProtKB-KW"/>
</dbReference>
<dbReference type="GO" id="GO:0000002">
    <property type="term" value="P:mitochondrial genome maintenance"/>
    <property type="evidence" value="ECO:0007669"/>
    <property type="project" value="UniProtKB-UniRule"/>
</dbReference>
<dbReference type="GO" id="GO:0007005">
    <property type="term" value="P:mitochondrion organization"/>
    <property type="evidence" value="ECO:0000315"/>
    <property type="project" value="CGD"/>
</dbReference>
<dbReference type="GO" id="GO:1990456">
    <property type="term" value="P:mitochondrion-endoplasmic reticulum membrane tethering"/>
    <property type="evidence" value="ECO:0007669"/>
    <property type="project" value="EnsemblFungi"/>
</dbReference>
<dbReference type="GO" id="GO:0015914">
    <property type="term" value="P:phospholipid transport"/>
    <property type="evidence" value="ECO:0007669"/>
    <property type="project" value="EnsemblFungi"/>
</dbReference>
<dbReference type="HAMAP" id="MF_03105">
    <property type="entry name" value="Mdm34"/>
    <property type="match status" value="1"/>
</dbReference>
<dbReference type="InterPro" id="IPR027536">
    <property type="entry name" value="Mdm34"/>
</dbReference>
<dbReference type="InterPro" id="IPR031468">
    <property type="entry name" value="SMP_LBD"/>
</dbReference>
<dbReference type="PANTHER" id="PTHR28185">
    <property type="entry name" value="MITOCHONDRIAL DISTRIBUTION AND MORPHOLOGY PROTEIN 34"/>
    <property type="match status" value="1"/>
</dbReference>
<dbReference type="PANTHER" id="PTHR28185:SF1">
    <property type="entry name" value="MITOCHONDRIAL DISTRIBUTION AND MORPHOLOGY PROTEIN 34"/>
    <property type="match status" value="1"/>
</dbReference>
<dbReference type="PROSITE" id="PS51847">
    <property type="entry name" value="SMP"/>
    <property type="match status" value="1"/>
</dbReference>
<sequence>MSFRFDRSVFESADFNERLRERLTGALNPKSRRHVERADEAGNEDDSSGHQRKSGGSLDILKNDIIVEKVDFSRIPNLEILDLDVGLGVSSISSGGGGSSMMKGICKISIEGAMLQVRTVIESNLLMLSMADSPEFVTPTLITNDSFSLPITMTFSNIKMEAISKVFFVARNSGIGISFDDVVLDFKFDCSIKILQTTIEKRLKRAMELLFKDTLPTALFNMSQSWFTNSDGSRSSAKHKKDTCDENNQPSAPKIIFEDADLQELSPANMLRLSTLVSSRQTLSLHSTVSSTLSLIPGCLERQNLYRFISRMPSLSNYYSSYVDHKKERAGTPSLLMNKRPSVDYLLRRSSSSGNSLMSSQAYFDKESNLLPMEVLEENAYDLDVITDIQNKLYMRSTDHDEQVNHTKPRRRKIKIGKNKKDKPAYKEEIEQQEPVQSTITVSMPFEEPQIIIEHNDETEAVKEERESVLSSPKLIRSTMDKTYTNSRILNTLLQKNGNLLDEETRLRAQSIDSVAHTKMGYLLGLNHIATPPPPPYY</sequence>